<evidence type="ECO:0000255" key="1"/>
<evidence type="ECO:0000255" key="2">
    <source>
        <dbReference type="PROSITE-ProRule" id="PRU01005"/>
    </source>
</evidence>
<evidence type="ECO:0000269" key="3">
    <source>
    </source>
</evidence>
<evidence type="ECO:0000269" key="4">
    <source>
    </source>
</evidence>
<evidence type="ECO:0000269" key="5">
    <source>
    </source>
</evidence>
<evidence type="ECO:0000303" key="6">
    <source>
    </source>
</evidence>
<evidence type="ECO:0000305" key="7">
    <source>
    </source>
</evidence>
<evidence type="ECO:0000312" key="8">
    <source>
        <dbReference type="EMBL" id="EDO33598.1"/>
    </source>
</evidence>
<evidence type="ECO:0000312" key="9">
    <source>
        <dbReference type="Proteomes" id="UP000001593"/>
    </source>
</evidence>
<comment type="function">
    <text evidence="5">In vivo, this neuropeptide induces contraction paralysis followed by death (within 2 hours) on 4 zebrafish larvae on the 15 tested (PubMed:33060291). Also induces body contraction in Nematostella 11-dpf polyps (PubMed:33060291).</text>
</comment>
<comment type="alternative products">
    <event type="alternative promoter"/>
    <isoform>
        <id>A7SRR3-1</id>
        <name>1</name>
        <name>ShK-like2a</name>
        <sequence type="displayed"/>
    </isoform>
    <isoform>
        <id>A7SRR3-2</id>
        <name>2</name>
        <name>ShK-like2b</name>
        <sequence type="described" ref="VSP_061205"/>
    </isoform>
</comment>
<comment type="tissue specificity">
    <molecule>Isoform 1</molecule>
    <text evidence="5">Transcripts are first expressed mostly in the endoderm (with rare ectodermal cells) in the late planulae. They are mostly expressed in endodermal ganglion cells in the body column and tentacles in primary polyps, as well as in a small number of ectodermal sensory neurons in tentacles and body wall. They are not expressed in nematocytes.</text>
</comment>
<comment type="tissue specificity">
    <molecule>Isoform 2</molecule>
    <text evidence="5">Transcripts are predominantly expressed in ectodermal sensory neurons in early and late planulae. They are expressed in endodermal ganglion cells in the body column and tentacles in primary polyps, as well as in a small number of ectodermal neurons in pharynx. They are not expressed in nematocytes.</text>
</comment>
<comment type="developmental stage">
    <molecule>Isoform 1</molecule>
    <text evidence="4 5">Is moderately detected in planulae and a little more detected in primary polyps (9d), as well as in both adult females and males (at protein level) (PubMed:33060291). Transcripts are expressed early in the life cycle and their expression is maintained through the adult stage (PubMed:29739837).</text>
</comment>
<comment type="developmental stage">
    <molecule>Isoform 2</molecule>
    <text evidence="4 5">Is moderately detected in planulae and a little more detected in primary polyps (9d), as well as in both adult females and males (at protein level) (PubMed:33060291). Transcripts are expressed early in the life cycle and their expression is maintained through the adult stage (PubMed:29739837).</text>
</comment>
<comment type="online information" name="National Center for Biotechnology Information (NCBI)">
    <molecule>Isoform 1</molecule>
    <link uri="https://www.ncbi.nlm.nih.gov/nuccore/HADN01006514.1/"/>
</comment>
<reference evidence="8 9" key="1">
    <citation type="journal article" date="2007" name="Science">
        <title>Sea anemone genome reveals ancestral eumetazoan gene repertoire and genomic organization.</title>
        <authorList>
            <person name="Putnam N.H."/>
            <person name="Srivastava M."/>
            <person name="Hellsten U."/>
            <person name="Dirks B."/>
            <person name="Chapman J."/>
            <person name="Salamov A."/>
            <person name="Terry A."/>
            <person name="Shapiro H."/>
            <person name="Lindquist E."/>
            <person name="Kapitonov V.V."/>
            <person name="Jurka J."/>
            <person name="Genikhovich G."/>
            <person name="Grigoriev I.V."/>
            <person name="Lucas S.M."/>
            <person name="Steele R.E."/>
            <person name="Finnerty J.R."/>
            <person name="Technau U."/>
            <person name="Martindale M.Q."/>
            <person name="Rokhsar D.S."/>
        </authorList>
    </citation>
    <scope>NUCLEOTIDE SEQUENCE [LARGE SCALE GENOMIC DNA] (ISOFORM 2)</scope>
    <source>
        <strain evidence="9">CH2 X CH6</strain>
    </source>
</reference>
<reference key="2">
    <citation type="journal article" date="2020" name="Proc. Natl. Acad. Sci. U.S.A.">
        <title>Toxin-like neuropeptides in the sea anemone Nematostella unravel recruitment from the nervous system to venom.</title>
        <authorList>
            <person name="Sachkova M.Y."/>
            <person name="Landau M."/>
            <person name="Surm J.M."/>
            <person name="Macrander J."/>
            <person name="Singer S.A."/>
            <person name="Reitzel A.M."/>
            <person name="Moran Y."/>
        </authorList>
    </citation>
    <scope>NUCLEOTIDE SEQUENCE [MRNA]</scope>
    <scope>PROTEIN SEQUENCE OF 77-86</scope>
    <scope>FUNCTION</scope>
    <scope>IDENTIFICATION BY MASS SPECTROMETRY</scope>
    <scope>TISSUE SPECIFICITY</scope>
    <scope>DEVELOPMENTAL STAGE</scope>
    <scope>RECOMBINANT EXPRESSION</scope>
    <scope>ALTERNATIVE PROMOTER USAGE (ISOFORMS 1 AND 2)</scope>
</reference>
<reference key="3">
    <citation type="journal article" date="2018" name="Development">
        <title>NvERTx: a gene expression database to compare embryogenesis and regeneration in the sea anemone Nematostella vectensis.</title>
        <authorList>
            <person name="Warner J.F."/>
            <person name="Guerlais V."/>
            <person name="Amiel A.R."/>
            <person name="Johnston H."/>
            <person name="Nedoncelle K."/>
            <person name="Roettinger E."/>
        </authorList>
    </citation>
    <scope>DEVELOPMENTAL STAGE</scope>
</reference>
<proteinExistence type="evidence at protein level"/>
<protein>
    <recommendedName>
        <fullName evidence="6">Neuropeptide ShK-like2</fullName>
    </recommendedName>
    <alternativeName>
        <fullName evidence="6">ShK-like2a</fullName>
    </alternativeName>
    <alternativeName>
        <fullName evidence="6">ShK-like2b</fullName>
    </alternativeName>
</protein>
<feature type="signal peptide" evidence="1">
    <location>
        <begin position="1"/>
        <end position="23"/>
    </location>
</feature>
<feature type="propeptide" id="PRO_0000453912" evidence="7">
    <location>
        <begin position="24"/>
        <end position="51"/>
    </location>
</feature>
<feature type="chain" id="PRO_0000453913" description="Neuropeptide ShK-like2" evidence="7">
    <location>
        <begin position="52"/>
        <end position="92"/>
    </location>
</feature>
<feature type="disulfide bond" evidence="2">
    <location>
        <begin position="53"/>
        <end position="92"/>
    </location>
</feature>
<feature type="disulfide bond" evidence="2">
    <location>
        <begin position="61"/>
        <end position="85"/>
    </location>
</feature>
<feature type="disulfide bond" evidence="2">
    <location>
        <begin position="70"/>
        <end position="89"/>
    </location>
</feature>
<feature type="splice variant" id="VSP_061205" description="In isoform 2." evidence="3">
    <original>MTTIRCVLFAVLLFAYCALLIKARSIDAEAEKTWQEEETKT</original>
    <variation>MDVKLVAILFACTLFSLSFANGYRLESLRNLPNDALEEESE</variation>
    <location>
        <begin position="1"/>
        <end position="41"/>
    </location>
</feature>
<accession>A7SRR3</accession>
<sequence length="92" mass="10303">MTTIRCVLFAVLLFAYCALLIKARSIDAEAEKTWQEEETKTVAEKSPLKKRGCSDAFPVVCRSPSVKAACYNPNHRSHAFITDVCKHTCHLC</sequence>
<organism>
    <name type="scientific">Nematostella vectensis</name>
    <name type="common">Starlet sea anemone</name>
    <dbReference type="NCBI Taxonomy" id="45351"/>
    <lineage>
        <taxon>Eukaryota</taxon>
        <taxon>Metazoa</taxon>
        <taxon>Cnidaria</taxon>
        <taxon>Anthozoa</taxon>
        <taxon>Hexacorallia</taxon>
        <taxon>Actiniaria</taxon>
        <taxon>Edwardsiidae</taxon>
        <taxon>Nematostella</taxon>
    </lineage>
</organism>
<dbReference type="EMBL" id="DS469766">
    <property type="protein sequence ID" value="EDO33598.1"/>
    <property type="molecule type" value="Genomic_DNA"/>
</dbReference>
<dbReference type="RefSeq" id="XP_001625698.1">
    <property type="nucleotide sequence ID" value="XM_001625648.1"/>
</dbReference>
<dbReference type="EnsemblMetazoa" id="EDO33598">
    <molecule id="A7SRR3-2"/>
    <property type="protein sequence ID" value="EDO33598"/>
    <property type="gene ID" value="NEMVEDRAFT_v1g233523"/>
</dbReference>
<dbReference type="HOGENOM" id="CLU_2415843_0_0_1"/>
<dbReference type="InParanoid" id="A7SRR3"/>
<dbReference type="Proteomes" id="UP000001593">
    <property type="component" value="Unassembled WGS sequence"/>
</dbReference>
<dbReference type="GO" id="GO:0007218">
    <property type="term" value="P:neuropeptide signaling pathway"/>
    <property type="evidence" value="ECO:0007669"/>
    <property type="project" value="UniProtKB-KW"/>
</dbReference>
<name>SHKL2_NEMVE</name>
<keyword id="KW-0877">Alternative promoter usage</keyword>
<keyword id="KW-0165">Cleavage on pair of basic residues</keyword>
<keyword id="KW-0903">Direct protein sequencing</keyword>
<keyword id="KW-1015">Disulfide bond</keyword>
<keyword id="KW-0527">Neuropeptide</keyword>
<keyword id="KW-1185">Reference proteome</keyword>
<keyword id="KW-0732">Signal</keyword>